<proteinExistence type="inferred from homology"/>
<gene>
    <name evidence="1" type="primary">trpD</name>
    <name type="ordered locus">Bphy_2700</name>
</gene>
<comment type="function">
    <text evidence="1">Catalyzes the transfer of the phosphoribosyl group of 5-phosphorylribose-1-pyrophosphate (PRPP) to anthranilate to yield N-(5'-phosphoribosyl)-anthranilate (PRA).</text>
</comment>
<comment type="catalytic activity">
    <reaction evidence="1">
        <text>N-(5-phospho-beta-D-ribosyl)anthranilate + diphosphate = 5-phospho-alpha-D-ribose 1-diphosphate + anthranilate</text>
        <dbReference type="Rhea" id="RHEA:11768"/>
        <dbReference type="ChEBI" id="CHEBI:16567"/>
        <dbReference type="ChEBI" id="CHEBI:18277"/>
        <dbReference type="ChEBI" id="CHEBI:33019"/>
        <dbReference type="ChEBI" id="CHEBI:58017"/>
        <dbReference type="EC" id="2.4.2.18"/>
    </reaction>
</comment>
<comment type="cofactor">
    <cofactor evidence="1">
        <name>Mg(2+)</name>
        <dbReference type="ChEBI" id="CHEBI:18420"/>
    </cofactor>
    <text evidence="1">Binds 2 magnesium ions per monomer.</text>
</comment>
<comment type="pathway">
    <text evidence="1">Amino-acid biosynthesis; L-tryptophan biosynthesis; L-tryptophan from chorismate: step 2/5.</text>
</comment>
<comment type="subunit">
    <text evidence="1">Homodimer.</text>
</comment>
<comment type="similarity">
    <text evidence="1">Belongs to the anthranilate phosphoribosyltransferase family.</text>
</comment>
<accession>B2JHI7</accession>
<sequence>MITPQEALQRTIEHREIFHDEMLHLMRLIMRGDMSPVMAAAIITGLRVKKETIGEITAAATVMREFARHVDVQDNSNFVDIVGTGGDGSHTFNISTATMFVSAAAGAKVAKHGNRGVSSKSGSADVLEALGVNIDLQPEQVAASITETGMGFMFAPNHHPAMKNIAPVRRELGVRTIFNILGPLTNPAGAPNQLQGVFHPDLVGIQVRVMQRLGARHVLVVYGRDGMDEVSLGAATLVGELRNGEITEYEIHPEDFGMQMVSNRTLKVADAAESKVLLLEALDNKPGVAREIVTLNAGTALYSANVAESIADGIRLAREAIASGKARAKVDELVRFTQQFKH</sequence>
<protein>
    <recommendedName>
        <fullName evidence="1">Anthranilate phosphoribosyltransferase</fullName>
        <ecNumber evidence="1">2.4.2.18</ecNumber>
    </recommendedName>
</protein>
<keyword id="KW-0028">Amino-acid biosynthesis</keyword>
<keyword id="KW-0057">Aromatic amino acid biosynthesis</keyword>
<keyword id="KW-0328">Glycosyltransferase</keyword>
<keyword id="KW-0460">Magnesium</keyword>
<keyword id="KW-0479">Metal-binding</keyword>
<keyword id="KW-1185">Reference proteome</keyword>
<keyword id="KW-0808">Transferase</keyword>
<keyword id="KW-0822">Tryptophan biosynthesis</keyword>
<organism>
    <name type="scientific">Paraburkholderia phymatum (strain DSM 17167 / CIP 108236 / LMG 21445 / STM815)</name>
    <name type="common">Burkholderia phymatum</name>
    <dbReference type="NCBI Taxonomy" id="391038"/>
    <lineage>
        <taxon>Bacteria</taxon>
        <taxon>Pseudomonadati</taxon>
        <taxon>Pseudomonadota</taxon>
        <taxon>Betaproteobacteria</taxon>
        <taxon>Burkholderiales</taxon>
        <taxon>Burkholderiaceae</taxon>
        <taxon>Paraburkholderia</taxon>
    </lineage>
</organism>
<reference key="1">
    <citation type="journal article" date="2014" name="Stand. Genomic Sci.">
        <title>Complete genome sequence of Burkholderia phymatum STM815(T), a broad host range and efficient nitrogen-fixing symbiont of Mimosa species.</title>
        <authorList>
            <person name="Moulin L."/>
            <person name="Klonowska A."/>
            <person name="Caroline B."/>
            <person name="Booth K."/>
            <person name="Vriezen J.A."/>
            <person name="Melkonian R."/>
            <person name="James E.K."/>
            <person name="Young J.P."/>
            <person name="Bena G."/>
            <person name="Hauser L."/>
            <person name="Land M."/>
            <person name="Kyrpides N."/>
            <person name="Bruce D."/>
            <person name="Chain P."/>
            <person name="Copeland A."/>
            <person name="Pitluck S."/>
            <person name="Woyke T."/>
            <person name="Lizotte-Waniewski M."/>
            <person name="Bristow J."/>
            <person name="Riley M."/>
        </authorList>
    </citation>
    <scope>NUCLEOTIDE SEQUENCE [LARGE SCALE GENOMIC DNA]</scope>
    <source>
        <strain>DSM 17167 / CIP 108236 / LMG 21445 / STM815</strain>
    </source>
</reference>
<evidence type="ECO:0000255" key="1">
    <source>
        <dbReference type="HAMAP-Rule" id="MF_00211"/>
    </source>
</evidence>
<dbReference type="EC" id="2.4.2.18" evidence="1"/>
<dbReference type="EMBL" id="CP001043">
    <property type="protein sequence ID" value="ACC71872.1"/>
    <property type="molecule type" value="Genomic_DNA"/>
</dbReference>
<dbReference type="RefSeq" id="WP_012402071.1">
    <property type="nucleotide sequence ID" value="NC_010622.1"/>
</dbReference>
<dbReference type="SMR" id="B2JHI7"/>
<dbReference type="STRING" id="391038.Bphy_2700"/>
<dbReference type="KEGG" id="bph:Bphy_2700"/>
<dbReference type="eggNOG" id="COG0547">
    <property type="taxonomic scope" value="Bacteria"/>
</dbReference>
<dbReference type="HOGENOM" id="CLU_034315_2_1_4"/>
<dbReference type="OrthoDB" id="9806430at2"/>
<dbReference type="UniPathway" id="UPA00035">
    <property type="reaction ID" value="UER00041"/>
</dbReference>
<dbReference type="Proteomes" id="UP000001192">
    <property type="component" value="Chromosome 1"/>
</dbReference>
<dbReference type="GO" id="GO:0005829">
    <property type="term" value="C:cytosol"/>
    <property type="evidence" value="ECO:0007669"/>
    <property type="project" value="TreeGrafter"/>
</dbReference>
<dbReference type="GO" id="GO:0004048">
    <property type="term" value="F:anthranilate phosphoribosyltransferase activity"/>
    <property type="evidence" value="ECO:0007669"/>
    <property type="project" value="UniProtKB-UniRule"/>
</dbReference>
<dbReference type="GO" id="GO:0000287">
    <property type="term" value="F:magnesium ion binding"/>
    <property type="evidence" value="ECO:0007669"/>
    <property type="project" value="UniProtKB-UniRule"/>
</dbReference>
<dbReference type="GO" id="GO:0000162">
    <property type="term" value="P:L-tryptophan biosynthetic process"/>
    <property type="evidence" value="ECO:0007669"/>
    <property type="project" value="UniProtKB-UniRule"/>
</dbReference>
<dbReference type="FunFam" id="1.20.970.10:FF:000006">
    <property type="entry name" value="Anthranilate phosphoribosyltransferase"/>
    <property type="match status" value="1"/>
</dbReference>
<dbReference type="FunFam" id="3.40.1030.10:FF:000002">
    <property type="entry name" value="Anthranilate phosphoribosyltransferase"/>
    <property type="match status" value="1"/>
</dbReference>
<dbReference type="Gene3D" id="3.40.1030.10">
    <property type="entry name" value="Nucleoside phosphorylase/phosphoribosyltransferase catalytic domain"/>
    <property type="match status" value="1"/>
</dbReference>
<dbReference type="Gene3D" id="1.20.970.10">
    <property type="entry name" value="Transferase, Pyrimidine Nucleoside Phosphorylase, Chain C"/>
    <property type="match status" value="1"/>
</dbReference>
<dbReference type="HAMAP" id="MF_00211">
    <property type="entry name" value="TrpD"/>
    <property type="match status" value="1"/>
</dbReference>
<dbReference type="InterPro" id="IPR005940">
    <property type="entry name" value="Anthranilate_Pribosyl_Tfrase"/>
</dbReference>
<dbReference type="InterPro" id="IPR000312">
    <property type="entry name" value="Glycosyl_Trfase_fam3"/>
</dbReference>
<dbReference type="InterPro" id="IPR017459">
    <property type="entry name" value="Glycosyl_Trfase_fam3_N_dom"/>
</dbReference>
<dbReference type="InterPro" id="IPR036320">
    <property type="entry name" value="Glycosyl_Trfase_fam3_N_dom_sf"/>
</dbReference>
<dbReference type="InterPro" id="IPR035902">
    <property type="entry name" value="Nuc_phospho_transferase"/>
</dbReference>
<dbReference type="NCBIfam" id="TIGR01245">
    <property type="entry name" value="trpD"/>
    <property type="match status" value="1"/>
</dbReference>
<dbReference type="PANTHER" id="PTHR43285">
    <property type="entry name" value="ANTHRANILATE PHOSPHORIBOSYLTRANSFERASE"/>
    <property type="match status" value="1"/>
</dbReference>
<dbReference type="PANTHER" id="PTHR43285:SF2">
    <property type="entry name" value="ANTHRANILATE PHOSPHORIBOSYLTRANSFERASE"/>
    <property type="match status" value="1"/>
</dbReference>
<dbReference type="Pfam" id="PF02885">
    <property type="entry name" value="Glycos_trans_3N"/>
    <property type="match status" value="1"/>
</dbReference>
<dbReference type="Pfam" id="PF00591">
    <property type="entry name" value="Glycos_transf_3"/>
    <property type="match status" value="1"/>
</dbReference>
<dbReference type="SUPFAM" id="SSF52418">
    <property type="entry name" value="Nucleoside phosphorylase/phosphoribosyltransferase catalytic domain"/>
    <property type="match status" value="1"/>
</dbReference>
<dbReference type="SUPFAM" id="SSF47648">
    <property type="entry name" value="Nucleoside phosphorylase/phosphoribosyltransferase N-terminal domain"/>
    <property type="match status" value="1"/>
</dbReference>
<name>TRPD_PARP8</name>
<feature type="chain" id="PRO_1000099790" description="Anthranilate phosphoribosyltransferase">
    <location>
        <begin position="1"/>
        <end position="342"/>
    </location>
</feature>
<feature type="binding site" evidence="1">
    <location>
        <position position="83"/>
    </location>
    <ligand>
        <name>5-phospho-alpha-D-ribose 1-diphosphate</name>
        <dbReference type="ChEBI" id="CHEBI:58017"/>
    </ligand>
</feature>
<feature type="binding site" evidence="1">
    <location>
        <position position="83"/>
    </location>
    <ligand>
        <name>anthranilate</name>
        <dbReference type="ChEBI" id="CHEBI:16567"/>
        <label>1</label>
    </ligand>
</feature>
<feature type="binding site" evidence="1">
    <location>
        <begin position="86"/>
        <end position="87"/>
    </location>
    <ligand>
        <name>5-phospho-alpha-D-ribose 1-diphosphate</name>
        <dbReference type="ChEBI" id="CHEBI:58017"/>
    </ligand>
</feature>
<feature type="binding site" evidence="1">
    <location>
        <position position="91"/>
    </location>
    <ligand>
        <name>5-phospho-alpha-D-ribose 1-diphosphate</name>
        <dbReference type="ChEBI" id="CHEBI:58017"/>
    </ligand>
</feature>
<feature type="binding site" evidence="1">
    <location>
        <begin position="93"/>
        <end position="96"/>
    </location>
    <ligand>
        <name>5-phospho-alpha-D-ribose 1-diphosphate</name>
        <dbReference type="ChEBI" id="CHEBI:58017"/>
    </ligand>
</feature>
<feature type="binding site" evidence="1">
    <location>
        <position position="95"/>
    </location>
    <ligand>
        <name>Mg(2+)</name>
        <dbReference type="ChEBI" id="CHEBI:18420"/>
        <label>1</label>
    </ligand>
</feature>
<feature type="binding site" evidence="1">
    <location>
        <begin position="111"/>
        <end position="119"/>
    </location>
    <ligand>
        <name>5-phospho-alpha-D-ribose 1-diphosphate</name>
        <dbReference type="ChEBI" id="CHEBI:58017"/>
    </ligand>
</feature>
<feature type="binding site" evidence="1">
    <location>
        <position position="114"/>
    </location>
    <ligand>
        <name>anthranilate</name>
        <dbReference type="ChEBI" id="CHEBI:16567"/>
        <label>1</label>
    </ligand>
</feature>
<feature type="binding site" evidence="1">
    <location>
        <position position="123"/>
    </location>
    <ligand>
        <name>5-phospho-alpha-D-ribose 1-diphosphate</name>
        <dbReference type="ChEBI" id="CHEBI:58017"/>
    </ligand>
</feature>
<feature type="binding site" evidence="1">
    <location>
        <position position="169"/>
    </location>
    <ligand>
        <name>anthranilate</name>
        <dbReference type="ChEBI" id="CHEBI:16567"/>
        <label>2</label>
    </ligand>
</feature>
<feature type="binding site" evidence="1">
    <location>
        <position position="228"/>
    </location>
    <ligand>
        <name>Mg(2+)</name>
        <dbReference type="ChEBI" id="CHEBI:18420"/>
        <label>2</label>
    </ligand>
</feature>
<feature type="binding site" evidence="1">
    <location>
        <position position="229"/>
    </location>
    <ligand>
        <name>Mg(2+)</name>
        <dbReference type="ChEBI" id="CHEBI:18420"/>
        <label>1</label>
    </ligand>
</feature>
<feature type="binding site" evidence="1">
    <location>
        <position position="229"/>
    </location>
    <ligand>
        <name>Mg(2+)</name>
        <dbReference type="ChEBI" id="CHEBI:18420"/>
        <label>2</label>
    </ligand>
</feature>